<organism>
    <name type="scientific">Rhodopirellula baltica (strain DSM 10527 / NCIMB 13988 / SH1)</name>
    <dbReference type="NCBI Taxonomy" id="243090"/>
    <lineage>
        <taxon>Bacteria</taxon>
        <taxon>Pseudomonadati</taxon>
        <taxon>Planctomycetota</taxon>
        <taxon>Planctomycetia</taxon>
        <taxon>Pirellulales</taxon>
        <taxon>Pirellulaceae</taxon>
        <taxon>Rhodopirellula</taxon>
    </lineage>
</organism>
<reference key="1">
    <citation type="journal article" date="2003" name="Proc. Natl. Acad. Sci. U.S.A.">
        <title>Complete genome sequence of the marine planctomycete Pirellula sp. strain 1.</title>
        <authorList>
            <person name="Gloeckner F.O."/>
            <person name="Kube M."/>
            <person name="Bauer M."/>
            <person name="Teeling H."/>
            <person name="Lombardot T."/>
            <person name="Ludwig W."/>
            <person name="Gade D."/>
            <person name="Beck A."/>
            <person name="Borzym K."/>
            <person name="Heitmann K."/>
            <person name="Rabus R."/>
            <person name="Schlesner H."/>
            <person name="Amann R."/>
            <person name="Reinhardt R."/>
        </authorList>
    </citation>
    <scope>NUCLEOTIDE SEQUENCE [LARGE SCALE GENOMIC DNA]</scope>
    <source>
        <strain>DSM 10527 / NCIMB 13988 / SH1</strain>
    </source>
</reference>
<evidence type="ECO:0000255" key="1">
    <source>
        <dbReference type="HAMAP-Rule" id="MF_01025"/>
    </source>
</evidence>
<evidence type="ECO:0000305" key="2"/>
<protein>
    <recommendedName>
        <fullName evidence="1">2-isopropylmalate synthase</fullName>
        <ecNumber evidence="1">2.3.3.13</ecNumber>
    </recommendedName>
    <alternativeName>
        <fullName evidence="1">Alpha-IPM synthase</fullName>
    </alternativeName>
    <alternativeName>
        <fullName evidence="1">Alpha-isopropylmalate synthase</fullName>
    </alternativeName>
</protein>
<comment type="function">
    <text evidence="1">Catalyzes the condensation of the acetyl group of acetyl-CoA with 3-methyl-2-oxobutanoate (2-ketoisovalerate) to form 3-carboxy-3-hydroxy-4-methylpentanoate (2-isopropylmalate).</text>
</comment>
<comment type="catalytic activity">
    <reaction evidence="1">
        <text>3-methyl-2-oxobutanoate + acetyl-CoA + H2O = (2S)-2-isopropylmalate + CoA + H(+)</text>
        <dbReference type="Rhea" id="RHEA:21524"/>
        <dbReference type="ChEBI" id="CHEBI:1178"/>
        <dbReference type="ChEBI" id="CHEBI:11851"/>
        <dbReference type="ChEBI" id="CHEBI:15377"/>
        <dbReference type="ChEBI" id="CHEBI:15378"/>
        <dbReference type="ChEBI" id="CHEBI:57287"/>
        <dbReference type="ChEBI" id="CHEBI:57288"/>
        <dbReference type="EC" id="2.3.3.13"/>
    </reaction>
</comment>
<comment type="cofactor">
    <cofactor evidence="1">
        <name>Mn(2+)</name>
        <dbReference type="ChEBI" id="CHEBI:29035"/>
    </cofactor>
</comment>
<comment type="pathway">
    <text evidence="1">Amino-acid biosynthesis; L-leucine biosynthesis; L-leucine from 3-methyl-2-oxobutanoate: step 1/4.</text>
</comment>
<comment type="subunit">
    <text evidence="1">Homodimer.</text>
</comment>
<comment type="subcellular location">
    <subcellularLocation>
        <location evidence="1">Cytoplasm</location>
    </subcellularLocation>
</comment>
<comment type="similarity">
    <text evidence="1">Belongs to the alpha-IPM synthase/homocitrate synthase family. LeuA type 1 subfamily.</text>
</comment>
<comment type="sequence caution" evidence="2">
    <conflict type="erroneous initiation">
        <sequence resource="EMBL-CDS" id="CAD77763"/>
    </conflict>
    <text>Extended N-terminus.</text>
</comment>
<gene>
    <name evidence="1" type="primary">leuA</name>
    <name type="ordered locus">RB12756</name>
</gene>
<dbReference type="EC" id="2.3.3.13" evidence="1"/>
<dbReference type="EMBL" id="BX294155">
    <property type="protein sequence ID" value="CAD77763.1"/>
    <property type="status" value="ALT_INIT"/>
    <property type="molecule type" value="Genomic_DNA"/>
</dbReference>
<dbReference type="RefSeq" id="NP_870686.1">
    <property type="nucleotide sequence ID" value="NC_005027.1"/>
</dbReference>
<dbReference type="SMR" id="Q7UI51"/>
<dbReference type="FunCoup" id="Q7UI51">
    <property type="interactions" value="475"/>
</dbReference>
<dbReference type="STRING" id="243090.RB12756"/>
<dbReference type="EnsemblBacteria" id="CAD77763">
    <property type="protein sequence ID" value="CAD77763"/>
    <property type="gene ID" value="RB12756"/>
</dbReference>
<dbReference type="KEGG" id="rba:RB12756"/>
<dbReference type="PATRIC" id="fig|243090.15.peg.6183"/>
<dbReference type="eggNOG" id="COG0119">
    <property type="taxonomic scope" value="Bacteria"/>
</dbReference>
<dbReference type="HOGENOM" id="CLU_022158_0_1_0"/>
<dbReference type="InParanoid" id="Q7UI51"/>
<dbReference type="OrthoDB" id="9804858at2"/>
<dbReference type="UniPathway" id="UPA00048">
    <property type="reaction ID" value="UER00070"/>
</dbReference>
<dbReference type="Proteomes" id="UP000001025">
    <property type="component" value="Chromosome"/>
</dbReference>
<dbReference type="GO" id="GO:0005737">
    <property type="term" value="C:cytoplasm"/>
    <property type="evidence" value="ECO:0007669"/>
    <property type="project" value="UniProtKB-SubCell"/>
</dbReference>
<dbReference type="GO" id="GO:0003852">
    <property type="term" value="F:2-isopropylmalate synthase activity"/>
    <property type="evidence" value="ECO:0000318"/>
    <property type="project" value="GO_Central"/>
</dbReference>
<dbReference type="GO" id="GO:0003985">
    <property type="term" value="F:acetyl-CoA C-acetyltransferase activity"/>
    <property type="evidence" value="ECO:0007669"/>
    <property type="project" value="UniProtKB-UniRule"/>
</dbReference>
<dbReference type="GO" id="GO:0030145">
    <property type="term" value="F:manganese ion binding"/>
    <property type="evidence" value="ECO:0007669"/>
    <property type="project" value="UniProtKB-UniRule"/>
</dbReference>
<dbReference type="GO" id="GO:0009098">
    <property type="term" value="P:L-leucine biosynthetic process"/>
    <property type="evidence" value="ECO:0000318"/>
    <property type="project" value="GO_Central"/>
</dbReference>
<dbReference type="CDD" id="cd07940">
    <property type="entry name" value="DRE_TIM_IPMS"/>
    <property type="match status" value="1"/>
</dbReference>
<dbReference type="FunFam" id="1.10.238.260:FF:000001">
    <property type="entry name" value="2-isopropylmalate synthase"/>
    <property type="match status" value="1"/>
</dbReference>
<dbReference type="FunFam" id="3.20.20.70:FF:000010">
    <property type="entry name" value="2-isopropylmalate synthase"/>
    <property type="match status" value="1"/>
</dbReference>
<dbReference type="FunFam" id="3.30.160.270:FF:000003">
    <property type="entry name" value="2-isopropylmalate synthase"/>
    <property type="match status" value="1"/>
</dbReference>
<dbReference type="Gene3D" id="1.10.238.260">
    <property type="match status" value="1"/>
</dbReference>
<dbReference type="Gene3D" id="3.30.160.270">
    <property type="match status" value="1"/>
</dbReference>
<dbReference type="Gene3D" id="3.20.20.70">
    <property type="entry name" value="Aldolase class I"/>
    <property type="match status" value="1"/>
</dbReference>
<dbReference type="HAMAP" id="MF_01025">
    <property type="entry name" value="LeuA_type1"/>
    <property type="match status" value="1"/>
</dbReference>
<dbReference type="InterPro" id="IPR050073">
    <property type="entry name" value="2-IPM_HCS-like"/>
</dbReference>
<dbReference type="InterPro" id="IPR013709">
    <property type="entry name" value="2-isopropylmalate_synth_dimer"/>
</dbReference>
<dbReference type="InterPro" id="IPR002034">
    <property type="entry name" value="AIPM/Hcit_synth_CS"/>
</dbReference>
<dbReference type="InterPro" id="IPR013785">
    <property type="entry name" value="Aldolase_TIM"/>
</dbReference>
<dbReference type="InterPro" id="IPR054691">
    <property type="entry name" value="LeuA/HCS_post-cat"/>
</dbReference>
<dbReference type="InterPro" id="IPR036230">
    <property type="entry name" value="LeuA_allosteric_dom_sf"/>
</dbReference>
<dbReference type="InterPro" id="IPR005671">
    <property type="entry name" value="LeuA_bact_synth"/>
</dbReference>
<dbReference type="InterPro" id="IPR000891">
    <property type="entry name" value="PYR_CT"/>
</dbReference>
<dbReference type="NCBIfam" id="TIGR00973">
    <property type="entry name" value="leuA_bact"/>
    <property type="match status" value="1"/>
</dbReference>
<dbReference type="NCBIfam" id="NF002086">
    <property type="entry name" value="PRK00915.1-3"/>
    <property type="match status" value="1"/>
</dbReference>
<dbReference type="PANTHER" id="PTHR10277:SF9">
    <property type="entry name" value="2-ISOPROPYLMALATE SYNTHASE 1, CHLOROPLASTIC-RELATED"/>
    <property type="match status" value="1"/>
</dbReference>
<dbReference type="PANTHER" id="PTHR10277">
    <property type="entry name" value="HOMOCITRATE SYNTHASE-RELATED"/>
    <property type="match status" value="1"/>
</dbReference>
<dbReference type="Pfam" id="PF22617">
    <property type="entry name" value="HCS_D2"/>
    <property type="match status" value="1"/>
</dbReference>
<dbReference type="Pfam" id="PF00682">
    <property type="entry name" value="HMGL-like"/>
    <property type="match status" value="1"/>
</dbReference>
<dbReference type="Pfam" id="PF08502">
    <property type="entry name" value="LeuA_dimer"/>
    <property type="match status" value="1"/>
</dbReference>
<dbReference type="SMART" id="SM00917">
    <property type="entry name" value="LeuA_dimer"/>
    <property type="match status" value="1"/>
</dbReference>
<dbReference type="SUPFAM" id="SSF110921">
    <property type="entry name" value="2-isopropylmalate synthase LeuA, allosteric (dimerisation) domain"/>
    <property type="match status" value="1"/>
</dbReference>
<dbReference type="SUPFAM" id="SSF51569">
    <property type="entry name" value="Aldolase"/>
    <property type="match status" value="1"/>
</dbReference>
<dbReference type="PROSITE" id="PS00815">
    <property type="entry name" value="AIPM_HOMOCIT_SYNTH_1"/>
    <property type="match status" value="1"/>
</dbReference>
<dbReference type="PROSITE" id="PS00816">
    <property type="entry name" value="AIPM_HOMOCIT_SYNTH_2"/>
    <property type="match status" value="1"/>
</dbReference>
<dbReference type="PROSITE" id="PS50991">
    <property type="entry name" value="PYR_CT"/>
    <property type="match status" value="1"/>
</dbReference>
<accession>Q7UI51</accession>
<sequence>MNQSAEAPSSENVATRQIRIFDTTLRDGEQSPGASMNLAEKLEVASALVDLGVDIIEAGFPIASPGDFESVRQIATTIRGATICGLARCAEKDIDRAWEALKTAPQARIHVFLATSAIHREFKLRMTPDEIVERAVAGVRRAASHCDDVEFSPEDACRTEHDFLCRVVEAAIDAGATTINVPDTVGYTTPGEIYDRFKMLRDRVPNMDKAVLSTHCHDDLGMAVANSLAAVDAGAGQIECTINGIGERAGNAALEELVMAMKTRQDFYHCQTNINSKRLVPVSRLVSKTTGINVQRNKAIVGRNAFAHESGIHQDGMLKERTTYEIMSPEEVGFTKTDLVLGKHSGRAALADRAKQLGMTLTGEQLQEVFEAFKELADKKKEIYDGDIVALVQQKISETVAPEWTLVDYEVTSGKNQTPNVRVTLRRDEQDITEQVAQGDGPIDAAFWAVEKITGIQVVCKDFRVRSATLGRDAIGEVNLEVEHEGKTYRGTGVSTDSVESTILAMLNAINRIVAGIASDPGELPQP</sequence>
<feature type="chain" id="PRO_0000140373" description="2-isopropylmalate synthase">
    <location>
        <begin position="1"/>
        <end position="527"/>
    </location>
</feature>
<feature type="domain" description="Pyruvate carboxyltransferase" evidence="1">
    <location>
        <begin position="18"/>
        <end position="280"/>
    </location>
</feature>
<feature type="region of interest" description="Regulatory domain" evidence="1">
    <location>
        <begin position="405"/>
        <end position="527"/>
    </location>
</feature>
<feature type="binding site" evidence="1">
    <location>
        <position position="27"/>
    </location>
    <ligand>
        <name>Mn(2+)</name>
        <dbReference type="ChEBI" id="CHEBI:29035"/>
    </ligand>
</feature>
<feature type="binding site" evidence="1">
    <location>
        <position position="215"/>
    </location>
    <ligand>
        <name>Mn(2+)</name>
        <dbReference type="ChEBI" id="CHEBI:29035"/>
    </ligand>
</feature>
<feature type="binding site" evidence="1">
    <location>
        <position position="217"/>
    </location>
    <ligand>
        <name>Mn(2+)</name>
        <dbReference type="ChEBI" id="CHEBI:29035"/>
    </ligand>
</feature>
<feature type="binding site" evidence="1">
    <location>
        <position position="251"/>
    </location>
    <ligand>
        <name>Mn(2+)</name>
        <dbReference type="ChEBI" id="CHEBI:29035"/>
    </ligand>
</feature>
<name>LEU1_RHOBA</name>
<proteinExistence type="inferred from homology"/>
<keyword id="KW-0028">Amino-acid biosynthesis</keyword>
<keyword id="KW-0100">Branched-chain amino acid biosynthesis</keyword>
<keyword id="KW-0963">Cytoplasm</keyword>
<keyword id="KW-0432">Leucine biosynthesis</keyword>
<keyword id="KW-0464">Manganese</keyword>
<keyword id="KW-0479">Metal-binding</keyword>
<keyword id="KW-1185">Reference proteome</keyword>
<keyword id="KW-0808">Transferase</keyword>